<gene>
    <name evidence="1" type="primary">sucC</name>
    <name type="ordered locus">HAPS_0656</name>
</gene>
<protein>
    <recommendedName>
        <fullName evidence="1">Succinate--CoA ligase [ADP-forming] subunit beta</fullName>
        <ecNumber evidence="1">6.2.1.5</ecNumber>
    </recommendedName>
    <alternativeName>
        <fullName evidence="1">Succinyl-CoA synthetase subunit beta</fullName>
        <shortName evidence="1">SCS-beta</shortName>
    </alternativeName>
</protein>
<evidence type="ECO:0000255" key="1">
    <source>
        <dbReference type="HAMAP-Rule" id="MF_00558"/>
    </source>
</evidence>
<proteinExistence type="inferred from homology"/>
<reference key="1">
    <citation type="journal article" date="2009" name="J. Bacteriol.">
        <title>Complete genome sequence of Haemophilus parasuis SH0165.</title>
        <authorList>
            <person name="Yue M."/>
            <person name="Yang F."/>
            <person name="Yang J."/>
            <person name="Bei W."/>
            <person name="Cai X."/>
            <person name="Chen L."/>
            <person name="Dong J."/>
            <person name="Zhou R."/>
            <person name="Jin M."/>
            <person name="Jin Q."/>
            <person name="Chen H."/>
        </authorList>
    </citation>
    <scope>NUCLEOTIDE SEQUENCE [LARGE SCALE GENOMIC DNA]</scope>
    <source>
        <strain>SH0165</strain>
    </source>
</reference>
<comment type="function">
    <text evidence="1">Succinyl-CoA synthetase functions in the citric acid cycle (TCA), coupling the hydrolysis of succinyl-CoA to the synthesis of either ATP or GTP and thus represents the only step of substrate-level phosphorylation in the TCA. The beta subunit provides nucleotide specificity of the enzyme and binds the substrate succinate, while the binding sites for coenzyme A and phosphate are found in the alpha subunit.</text>
</comment>
<comment type="catalytic activity">
    <reaction evidence="1">
        <text>succinate + ATP + CoA = succinyl-CoA + ADP + phosphate</text>
        <dbReference type="Rhea" id="RHEA:17661"/>
        <dbReference type="ChEBI" id="CHEBI:30031"/>
        <dbReference type="ChEBI" id="CHEBI:30616"/>
        <dbReference type="ChEBI" id="CHEBI:43474"/>
        <dbReference type="ChEBI" id="CHEBI:57287"/>
        <dbReference type="ChEBI" id="CHEBI:57292"/>
        <dbReference type="ChEBI" id="CHEBI:456216"/>
        <dbReference type="EC" id="6.2.1.5"/>
    </reaction>
    <physiologicalReaction direction="right-to-left" evidence="1">
        <dbReference type="Rhea" id="RHEA:17663"/>
    </physiologicalReaction>
</comment>
<comment type="catalytic activity">
    <reaction evidence="1">
        <text>GTP + succinate + CoA = succinyl-CoA + GDP + phosphate</text>
        <dbReference type="Rhea" id="RHEA:22120"/>
        <dbReference type="ChEBI" id="CHEBI:30031"/>
        <dbReference type="ChEBI" id="CHEBI:37565"/>
        <dbReference type="ChEBI" id="CHEBI:43474"/>
        <dbReference type="ChEBI" id="CHEBI:57287"/>
        <dbReference type="ChEBI" id="CHEBI:57292"/>
        <dbReference type="ChEBI" id="CHEBI:58189"/>
    </reaction>
    <physiologicalReaction direction="right-to-left" evidence="1">
        <dbReference type="Rhea" id="RHEA:22122"/>
    </physiologicalReaction>
</comment>
<comment type="cofactor">
    <cofactor evidence="1">
        <name>Mg(2+)</name>
        <dbReference type="ChEBI" id="CHEBI:18420"/>
    </cofactor>
    <text evidence="1">Binds 1 Mg(2+) ion per subunit.</text>
</comment>
<comment type="pathway">
    <text evidence="1">Carbohydrate metabolism; tricarboxylic acid cycle; succinate from succinyl-CoA (ligase route): step 1/1.</text>
</comment>
<comment type="subunit">
    <text evidence="1">Heterotetramer of two alpha and two beta subunits.</text>
</comment>
<comment type="similarity">
    <text evidence="1">Belongs to the succinate/malate CoA ligase beta subunit family.</text>
</comment>
<keyword id="KW-0067">ATP-binding</keyword>
<keyword id="KW-0436">Ligase</keyword>
<keyword id="KW-0460">Magnesium</keyword>
<keyword id="KW-0479">Metal-binding</keyword>
<keyword id="KW-0547">Nucleotide-binding</keyword>
<keyword id="KW-1185">Reference proteome</keyword>
<keyword id="KW-0816">Tricarboxylic acid cycle</keyword>
<organism>
    <name type="scientific">Glaesserella parasuis serovar 5 (strain SH0165)</name>
    <name type="common">Haemophilus parasuis</name>
    <dbReference type="NCBI Taxonomy" id="557723"/>
    <lineage>
        <taxon>Bacteria</taxon>
        <taxon>Pseudomonadati</taxon>
        <taxon>Pseudomonadota</taxon>
        <taxon>Gammaproteobacteria</taxon>
        <taxon>Pasteurellales</taxon>
        <taxon>Pasteurellaceae</taxon>
        <taxon>Glaesserella</taxon>
    </lineage>
</organism>
<feature type="chain" id="PRO_1000197705" description="Succinate--CoA ligase [ADP-forming] subunit beta">
    <location>
        <begin position="1"/>
        <end position="388"/>
    </location>
</feature>
<feature type="domain" description="ATP-grasp" evidence="1">
    <location>
        <begin position="9"/>
        <end position="244"/>
    </location>
</feature>
<feature type="binding site" evidence="1">
    <location>
        <position position="46"/>
    </location>
    <ligand>
        <name>ATP</name>
        <dbReference type="ChEBI" id="CHEBI:30616"/>
    </ligand>
</feature>
<feature type="binding site" evidence="1">
    <location>
        <begin position="53"/>
        <end position="55"/>
    </location>
    <ligand>
        <name>ATP</name>
        <dbReference type="ChEBI" id="CHEBI:30616"/>
    </ligand>
</feature>
<feature type="binding site" evidence="1">
    <location>
        <position position="99"/>
    </location>
    <ligand>
        <name>ATP</name>
        <dbReference type="ChEBI" id="CHEBI:30616"/>
    </ligand>
</feature>
<feature type="binding site" evidence="1">
    <location>
        <position position="102"/>
    </location>
    <ligand>
        <name>ATP</name>
        <dbReference type="ChEBI" id="CHEBI:30616"/>
    </ligand>
</feature>
<feature type="binding site" evidence="1">
    <location>
        <position position="107"/>
    </location>
    <ligand>
        <name>ATP</name>
        <dbReference type="ChEBI" id="CHEBI:30616"/>
    </ligand>
</feature>
<feature type="binding site" evidence="1">
    <location>
        <position position="199"/>
    </location>
    <ligand>
        <name>Mg(2+)</name>
        <dbReference type="ChEBI" id="CHEBI:18420"/>
    </ligand>
</feature>
<feature type="binding site" evidence="1">
    <location>
        <position position="213"/>
    </location>
    <ligand>
        <name>Mg(2+)</name>
        <dbReference type="ChEBI" id="CHEBI:18420"/>
    </ligand>
</feature>
<feature type="binding site" evidence="1">
    <location>
        <position position="264"/>
    </location>
    <ligand>
        <name>substrate</name>
        <note>ligand shared with subunit alpha</note>
    </ligand>
</feature>
<feature type="binding site" evidence="1">
    <location>
        <begin position="321"/>
        <end position="323"/>
    </location>
    <ligand>
        <name>substrate</name>
        <note>ligand shared with subunit alpha</note>
    </ligand>
</feature>
<sequence length="388" mass="41239">MNLHEYQGKQIFAKYKLPVSQGIACKTADEAVEAIKQLKGDAWAIKCQVHAGGRGKAGGVKLVRNEAEVREFADKWLGKRLVTFQTDANGQPVNTLYVEETAGIARELYLGAVIDRSSQKVVFMASSAGGMNIEEVAAKTPELLHKVAIDPLVGGMAYQGRELAFKLGLTGDQIKQFSFIFTQLAKLFVEKDLSLLEINPLVVTTEGNLLCLDAKMVVDGNALYRQPELAAMHDPSQDDPREALAESHQLNYVALDGNIGCMVNGAGLAMGTMDIVKLHGGFPANFLDVGGGATKERVAEAFKIILSDKAVKAVLVNIFGGIVRCDLIADGIIAAVNEVGVNVPVVVRLEGNNAELGREILAKSGLNIIAAATLTDAAVEAVKAAGGK</sequence>
<name>SUCC_GLAP5</name>
<dbReference type="EC" id="6.2.1.5" evidence="1"/>
<dbReference type="EMBL" id="CP001321">
    <property type="protein sequence ID" value="ACL32304.1"/>
    <property type="molecule type" value="Genomic_DNA"/>
</dbReference>
<dbReference type="RefSeq" id="WP_012621853.1">
    <property type="nucleotide sequence ID" value="NC_011852.1"/>
</dbReference>
<dbReference type="SMR" id="B8F4Q2"/>
<dbReference type="STRING" id="557723.HAPS_0656"/>
<dbReference type="KEGG" id="hap:HAPS_0656"/>
<dbReference type="HOGENOM" id="CLU_037430_0_2_6"/>
<dbReference type="UniPathway" id="UPA00223">
    <property type="reaction ID" value="UER00999"/>
</dbReference>
<dbReference type="Proteomes" id="UP000006743">
    <property type="component" value="Chromosome"/>
</dbReference>
<dbReference type="GO" id="GO:0005829">
    <property type="term" value="C:cytosol"/>
    <property type="evidence" value="ECO:0007669"/>
    <property type="project" value="TreeGrafter"/>
</dbReference>
<dbReference type="GO" id="GO:0042709">
    <property type="term" value="C:succinate-CoA ligase complex"/>
    <property type="evidence" value="ECO:0007669"/>
    <property type="project" value="TreeGrafter"/>
</dbReference>
<dbReference type="GO" id="GO:0005524">
    <property type="term" value="F:ATP binding"/>
    <property type="evidence" value="ECO:0007669"/>
    <property type="project" value="UniProtKB-UniRule"/>
</dbReference>
<dbReference type="GO" id="GO:0000287">
    <property type="term" value="F:magnesium ion binding"/>
    <property type="evidence" value="ECO:0007669"/>
    <property type="project" value="UniProtKB-UniRule"/>
</dbReference>
<dbReference type="GO" id="GO:0004775">
    <property type="term" value="F:succinate-CoA ligase (ADP-forming) activity"/>
    <property type="evidence" value="ECO:0007669"/>
    <property type="project" value="UniProtKB-UniRule"/>
</dbReference>
<dbReference type="GO" id="GO:0004776">
    <property type="term" value="F:succinate-CoA ligase (GDP-forming) activity"/>
    <property type="evidence" value="ECO:0007669"/>
    <property type="project" value="RHEA"/>
</dbReference>
<dbReference type="GO" id="GO:0006104">
    <property type="term" value="P:succinyl-CoA metabolic process"/>
    <property type="evidence" value="ECO:0007669"/>
    <property type="project" value="TreeGrafter"/>
</dbReference>
<dbReference type="GO" id="GO:0006099">
    <property type="term" value="P:tricarboxylic acid cycle"/>
    <property type="evidence" value="ECO:0007669"/>
    <property type="project" value="UniProtKB-UniRule"/>
</dbReference>
<dbReference type="FunFam" id="3.30.1490.20:FF:000002">
    <property type="entry name" value="Succinate--CoA ligase [ADP-forming] subunit beta"/>
    <property type="match status" value="1"/>
</dbReference>
<dbReference type="FunFam" id="3.30.470.20:FF:000002">
    <property type="entry name" value="Succinate--CoA ligase [ADP-forming] subunit beta"/>
    <property type="match status" value="1"/>
</dbReference>
<dbReference type="FunFam" id="3.40.50.261:FF:000001">
    <property type="entry name" value="Succinate--CoA ligase [ADP-forming] subunit beta"/>
    <property type="match status" value="1"/>
</dbReference>
<dbReference type="Gene3D" id="3.30.1490.20">
    <property type="entry name" value="ATP-grasp fold, A domain"/>
    <property type="match status" value="1"/>
</dbReference>
<dbReference type="Gene3D" id="3.30.470.20">
    <property type="entry name" value="ATP-grasp fold, B domain"/>
    <property type="match status" value="1"/>
</dbReference>
<dbReference type="Gene3D" id="3.40.50.261">
    <property type="entry name" value="Succinyl-CoA synthetase domains"/>
    <property type="match status" value="1"/>
</dbReference>
<dbReference type="HAMAP" id="MF_00558">
    <property type="entry name" value="Succ_CoA_beta"/>
    <property type="match status" value="1"/>
</dbReference>
<dbReference type="InterPro" id="IPR013650">
    <property type="entry name" value="ATP-grasp_succ-CoA_synth-type"/>
</dbReference>
<dbReference type="InterPro" id="IPR013815">
    <property type="entry name" value="ATP_grasp_subdomain_1"/>
</dbReference>
<dbReference type="InterPro" id="IPR017866">
    <property type="entry name" value="Succ-CoA_synthase_bsu_CS"/>
</dbReference>
<dbReference type="InterPro" id="IPR005811">
    <property type="entry name" value="SUCC_ACL_C"/>
</dbReference>
<dbReference type="InterPro" id="IPR005809">
    <property type="entry name" value="Succ_CoA_ligase-like_bsu"/>
</dbReference>
<dbReference type="InterPro" id="IPR016102">
    <property type="entry name" value="Succinyl-CoA_synth-like"/>
</dbReference>
<dbReference type="NCBIfam" id="NF001913">
    <property type="entry name" value="PRK00696.1"/>
    <property type="match status" value="1"/>
</dbReference>
<dbReference type="NCBIfam" id="TIGR01016">
    <property type="entry name" value="sucCoAbeta"/>
    <property type="match status" value="1"/>
</dbReference>
<dbReference type="PANTHER" id="PTHR11815:SF10">
    <property type="entry name" value="SUCCINATE--COA LIGASE [GDP-FORMING] SUBUNIT BETA, MITOCHONDRIAL"/>
    <property type="match status" value="1"/>
</dbReference>
<dbReference type="PANTHER" id="PTHR11815">
    <property type="entry name" value="SUCCINYL-COA SYNTHETASE BETA CHAIN"/>
    <property type="match status" value="1"/>
</dbReference>
<dbReference type="Pfam" id="PF08442">
    <property type="entry name" value="ATP-grasp_2"/>
    <property type="match status" value="1"/>
</dbReference>
<dbReference type="Pfam" id="PF00549">
    <property type="entry name" value="Ligase_CoA"/>
    <property type="match status" value="1"/>
</dbReference>
<dbReference type="PIRSF" id="PIRSF001554">
    <property type="entry name" value="SucCS_beta"/>
    <property type="match status" value="1"/>
</dbReference>
<dbReference type="SUPFAM" id="SSF56059">
    <property type="entry name" value="Glutathione synthetase ATP-binding domain-like"/>
    <property type="match status" value="1"/>
</dbReference>
<dbReference type="SUPFAM" id="SSF52210">
    <property type="entry name" value="Succinyl-CoA synthetase domains"/>
    <property type="match status" value="1"/>
</dbReference>
<dbReference type="PROSITE" id="PS01217">
    <property type="entry name" value="SUCCINYL_COA_LIG_3"/>
    <property type="match status" value="1"/>
</dbReference>
<accession>B8F4Q2</accession>